<name>RL28_NOCSJ</name>
<comment type="similarity">
    <text evidence="1">Belongs to the bacterial ribosomal protein bL28 family.</text>
</comment>
<dbReference type="EMBL" id="CP000509">
    <property type="protein sequence ID" value="ABL82789.1"/>
    <property type="molecule type" value="Genomic_DNA"/>
</dbReference>
<dbReference type="RefSeq" id="WP_011756723.1">
    <property type="nucleotide sequence ID" value="NC_008699.1"/>
</dbReference>
<dbReference type="SMR" id="A1SLV4"/>
<dbReference type="STRING" id="196162.Noca_3287"/>
<dbReference type="KEGG" id="nca:Noca_3287"/>
<dbReference type="eggNOG" id="COG0227">
    <property type="taxonomic scope" value="Bacteria"/>
</dbReference>
<dbReference type="HOGENOM" id="CLU_064548_7_0_11"/>
<dbReference type="OrthoDB" id="9805609at2"/>
<dbReference type="Proteomes" id="UP000000640">
    <property type="component" value="Chromosome"/>
</dbReference>
<dbReference type="GO" id="GO:1990904">
    <property type="term" value="C:ribonucleoprotein complex"/>
    <property type="evidence" value="ECO:0007669"/>
    <property type="project" value="UniProtKB-KW"/>
</dbReference>
<dbReference type="GO" id="GO:0005840">
    <property type="term" value="C:ribosome"/>
    <property type="evidence" value="ECO:0007669"/>
    <property type="project" value="UniProtKB-KW"/>
</dbReference>
<dbReference type="GO" id="GO:0003735">
    <property type="term" value="F:structural constituent of ribosome"/>
    <property type="evidence" value="ECO:0007669"/>
    <property type="project" value="InterPro"/>
</dbReference>
<dbReference type="GO" id="GO:0006412">
    <property type="term" value="P:translation"/>
    <property type="evidence" value="ECO:0007669"/>
    <property type="project" value="UniProtKB-UniRule"/>
</dbReference>
<dbReference type="Gene3D" id="2.30.170.40">
    <property type="entry name" value="Ribosomal protein L28/L24"/>
    <property type="match status" value="1"/>
</dbReference>
<dbReference type="HAMAP" id="MF_00373">
    <property type="entry name" value="Ribosomal_bL28"/>
    <property type="match status" value="1"/>
</dbReference>
<dbReference type="InterPro" id="IPR050096">
    <property type="entry name" value="Bacterial_rp_bL28"/>
</dbReference>
<dbReference type="InterPro" id="IPR026569">
    <property type="entry name" value="Ribosomal_bL28"/>
</dbReference>
<dbReference type="InterPro" id="IPR034704">
    <property type="entry name" value="Ribosomal_bL28/bL31-like_sf"/>
</dbReference>
<dbReference type="InterPro" id="IPR001383">
    <property type="entry name" value="Ribosomal_bL28_bact-type"/>
</dbReference>
<dbReference type="InterPro" id="IPR037147">
    <property type="entry name" value="Ribosomal_bL28_sf"/>
</dbReference>
<dbReference type="NCBIfam" id="TIGR00009">
    <property type="entry name" value="L28"/>
    <property type="match status" value="1"/>
</dbReference>
<dbReference type="PANTHER" id="PTHR39080">
    <property type="entry name" value="50S RIBOSOMAL PROTEIN L28"/>
    <property type="match status" value="1"/>
</dbReference>
<dbReference type="PANTHER" id="PTHR39080:SF1">
    <property type="entry name" value="LARGE RIBOSOMAL SUBUNIT PROTEIN BL28A"/>
    <property type="match status" value="1"/>
</dbReference>
<dbReference type="Pfam" id="PF00830">
    <property type="entry name" value="Ribosomal_L28"/>
    <property type="match status" value="1"/>
</dbReference>
<dbReference type="SUPFAM" id="SSF143800">
    <property type="entry name" value="L28p-like"/>
    <property type="match status" value="1"/>
</dbReference>
<reference key="1">
    <citation type="submission" date="2006-12" db="EMBL/GenBank/DDBJ databases">
        <title>Complete sequence of chromosome 1 of Nocardioides sp. JS614.</title>
        <authorList>
            <person name="Copeland A."/>
            <person name="Lucas S."/>
            <person name="Lapidus A."/>
            <person name="Barry K."/>
            <person name="Detter J.C."/>
            <person name="Glavina del Rio T."/>
            <person name="Hammon N."/>
            <person name="Israni S."/>
            <person name="Dalin E."/>
            <person name="Tice H."/>
            <person name="Pitluck S."/>
            <person name="Thompson L.S."/>
            <person name="Brettin T."/>
            <person name="Bruce D."/>
            <person name="Han C."/>
            <person name="Tapia R."/>
            <person name="Schmutz J."/>
            <person name="Larimer F."/>
            <person name="Land M."/>
            <person name="Hauser L."/>
            <person name="Kyrpides N."/>
            <person name="Kim E."/>
            <person name="Mattes T."/>
            <person name="Gossett J."/>
            <person name="Richardson P."/>
        </authorList>
    </citation>
    <scope>NUCLEOTIDE SEQUENCE [LARGE SCALE GENOMIC DNA]</scope>
    <source>
        <strain>ATCC BAA-499 / JS614</strain>
    </source>
</reference>
<evidence type="ECO:0000255" key="1">
    <source>
        <dbReference type="HAMAP-Rule" id="MF_00373"/>
    </source>
</evidence>
<evidence type="ECO:0000305" key="2"/>
<feature type="chain" id="PRO_1000007290" description="Large ribosomal subunit protein bL28">
    <location>
        <begin position="1"/>
        <end position="61"/>
    </location>
</feature>
<keyword id="KW-1185">Reference proteome</keyword>
<keyword id="KW-0687">Ribonucleoprotein</keyword>
<keyword id="KW-0689">Ribosomal protein</keyword>
<protein>
    <recommendedName>
        <fullName evidence="1">Large ribosomal subunit protein bL28</fullName>
    </recommendedName>
    <alternativeName>
        <fullName evidence="2">50S ribosomal protein L28</fullName>
    </alternativeName>
</protein>
<gene>
    <name evidence="1" type="primary">rpmB</name>
    <name type="ordered locus">Noca_3287</name>
</gene>
<sequence>MAAVCDICAKKPGFGNNRPWSRKITKRRFDPNIQRVRATVNGTPKRLNVCTGCLKAGKVTR</sequence>
<organism>
    <name type="scientific">Nocardioides sp. (strain ATCC BAA-499 / JS614)</name>
    <dbReference type="NCBI Taxonomy" id="196162"/>
    <lineage>
        <taxon>Bacteria</taxon>
        <taxon>Bacillati</taxon>
        <taxon>Actinomycetota</taxon>
        <taxon>Actinomycetes</taxon>
        <taxon>Propionibacteriales</taxon>
        <taxon>Nocardioidaceae</taxon>
        <taxon>Nocardioides</taxon>
    </lineage>
</organism>
<accession>A1SLV4</accession>
<proteinExistence type="inferred from homology"/>